<gene>
    <name evidence="4" type="primary">dpmpC</name>
</gene>
<organism>
    <name type="scientific">Macrophomina phaseolina (strain MS6)</name>
    <name type="common">Charcoal rot fungus</name>
    <dbReference type="NCBI Taxonomy" id="1126212"/>
    <lineage>
        <taxon>Eukaryota</taxon>
        <taxon>Fungi</taxon>
        <taxon>Dikarya</taxon>
        <taxon>Ascomycota</taxon>
        <taxon>Pezizomycotina</taxon>
        <taxon>Dothideomycetes</taxon>
        <taxon>Dothideomycetes incertae sedis</taxon>
        <taxon>Botryosphaeriales</taxon>
        <taxon>Botryosphaeriaceae</taxon>
        <taxon>Macrophomina</taxon>
    </lineage>
</organism>
<accession>P9WEW7</accession>
<comment type="function">
    <text evidence="3 6">Polyprenyl transferase; part of the gene cluster that mediates the biosynthesis of diterpenoid pyrones (PubMed:32286350). The first step of the pathway is the synthesis of the alpha-pyrone moiety by the polyketide synthase dpmpA via condensation of one acetyl-CoA starter unit with 3 malonyl-CoA units and 2 methylations (Probable). The alpha-pyrone is then combined with geranylgeranyl pyrophosphate (GGPP) formed by the GGPP synthase dpmpD through the action of the prenyltransferase dpmpC to yield a linear alpha-pyrone diterpenoid (Probable). Subsequent steps in the diterpenoid pyrone biosynthetic pathway involve the decalin core formation, which is initiated by the epoxidation of the C10-C11 olefin by the FAD-dependent oxidoreductase dpmpE, and is followed by a cyclization cascade catalyzed by the terpene cyclase dpmpB (Probable). The short chain dehydrogenase/reductase dpmpG then oxidizes the 8S hydroxy group to a ketone and the short chain dehydrogenase/reductase dpmpH reduces the ketone to the 8R hydroxy group to yield higginsianin B (PubMed:32286350). Higginsianin B is further methylated by the methyltransferase dpmpI to produce the intermediate named FDDP B (PubMed:32286350). The cytochrome P450 monooxygenase dpmpJ then oxidizes the C-26 methyl to primary alcohol, producing the final diterpenoid pyrone with a C-26 primary alcohol on the gamma-pyrone moiety named FDDP C (PubMed:32286350).</text>
</comment>
<comment type="cofactor">
    <cofactor evidence="1">
        <name>Mg(2+)</name>
        <dbReference type="ChEBI" id="CHEBI:18420"/>
    </cofactor>
</comment>
<comment type="pathway">
    <text evidence="6">Secondary metabolite biosynthesis; terpenoid biosynthesis.</text>
</comment>
<comment type="subcellular location">
    <subcellularLocation>
        <location evidence="2">Membrane</location>
        <topology evidence="2">Multi-pass membrane protein</topology>
    </subcellularLocation>
</comment>
<comment type="biotechnology">
    <text evidence="3">Diterpenoid pyrones display various biological activities and FDDP C shows anti-cancer and anti-HIV activities (PubMed:32286350). FDDP C also shows inhibitory activity of 42-mer-amyloid beta aggregation that is involved in the pathogenesis of Alzheimer's disease (PubMed:32286350).</text>
</comment>
<comment type="similarity">
    <text evidence="5">Belongs to the UbiA prenyltransferase family.</text>
</comment>
<name>DPMPC_MACPH</name>
<sequence length="345" mass="38980">MAASNKIHLLKDLLILSRFNKYTPVFASFAGLWSTLLAGAARLAEHPSAISPAFVLRQTGLCFLAAYIFYGAGTVWNDWVDRDVDANVARTKDRPLASGKVTTFQAMLWMVLQTLATWYLLNVMLDGNDLYVLNPLHALMIAVHRIKNGRGTDGCTYRWKHFLPVLVASFLYPFGKRPAARKLYVYPQYILGFIVAWPAVIGWAATYGQHQPFTETVRQCLPLCSMVYFWIIYLNTAYSYQDVADDRKMNVNSFYNLGGQHLHLLLVALASPVPVCMLLFLREFDSFWLWATWLGGWTASFAEQLIHFDPKEPASGGTLHKSNFMLGIWTIFACAVELLRSASKV</sequence>
<feature type="chain" id="PRO_0000451536" description="Polyprenyl transferase dpmpC">
    <location>
        <begin position="1"/>
        <end position="345"/>
    </location>
</feature>
<feature type="transmembrane region" description="Helical" evidence="2">
    <location>
        <begin position="24"/>
        <end position="44"/>
    </location>
</feature>
<feature type="transmembrane region" description="Helical" evidence="2">
    <location>
        <begin position="60"/>
        <end position="80"/>
    </location>
</feature>
<feature type="transmembrane region" description="Helical" evidence="2">
    <location>
        <begin position="101"/>
        <end position="121"/>
    </location>
</feature>
<feature type="transmembrane region" description="Helical" evidence="2">
    <location>
        <begin position="183"/>
        <end position="203"/>
    </location>
</feature>
<feature type="transmembrane region" description="Helical" evidence="2">
    <location>
        <begin position="220"/>
        <end position="240"/>
    </location>
</feature>
<feature type="transmembrane region" description="Helical" evidence="2">
    <location>
        <begin position="261"/>
        <end position="281"/>
    </location>
</feature>
<feature type="transmembrane region" description="Helical" evidence="2">
    <location>
        <begin position="286"/>
        <end position="306"/>
    </location>
</feature>
<feature type="transmembrane region" description="Helical" evidence="2">
    <location>
        <begin position="319"/>
        <end position="339"/>
    </location>
</feature>
<evidence type="ECO:0000250" key="1">
    <source>
        <dbReference type="UniProtKB" id="P32378"/>
    </source>
</evidence>
<evidence type="ECO:0000255" key="2"/>
<evidence type="ECO:0000269" key="3">
    <source>
    </source>
</evidence>
<evidence type="ECO:0000303" key="4">
    <source>
    </source>
</evidence>
<evidence type="ECO:0000305" key="5"/>
<evidence type="ECO:0000305" key="6">
    <source>
    </source>
</evidence>
<reference key="1">
    <citation type="journal article" date="2012" name="BMC Genomics">
        <title>Tools to kill: Genome of one of the most destructive plant pathogenic fungi Macrophomina phaseolina.</title>
        <authorList>
            <person name="Islam M.S."/>
            <person name="Haque M.S."/>
            <person name="Islam M.M."/>
            <person name="Emdad E.M."/>
            <person name="Halim A."/>
            <person name="Hossen Q.M.M."/>
            <person name="Hossain M.Z."/>
            <person name="Ahmed B."/>
            <person name="Rahim S."/>
            <person name="Rahman M.S."/>
            <person name="Alam M.M."/>
            <person name="Hou S."/>
            <person name="Wan X."/>
            <person name="Saito J.A."/>
            <person name="Alam M."/>
        </authorList>
    </citation>
    <scope>NUCLEOTIDE SEQUENCE [LARGE SCALE GENOMIC DNA]</scope>
    <source>
        <strain>MS6</strain>
    </source>
</reference>
<reference key="2">
    <citation type="journal article" date="2020" name="Nat. Commun.">
        <title>Synthetic biology based construction of biological activity-related library of fungal decalin-containing diterpenoid pyrones.</title>
        <authorList>
            <person name="Tsukada K."/>
            <person name="Shinki S."/>
            <person name="Kaneko A."/>
            <person name="Murakami K."/>
            <person name="Irie K."/>
            <person name="Murai M."/>
            <person name="Miyoshi H."/>
            <person name="Dan S."/>
            <person name="Kawaji K."/>
            <person name="Hayashi H."/>
            <person name="Kodama E.N."/>
            <person name="Hori A."/>
            <person name="Salim E."/>
            <person name="Kuraishi T."/>
            <person name="Hirata N."/>
            <person name="Kanda Y."/>
            <person name="Asai T."/>
        </authorList>
    </citation>
    <scope>FUNCTION</scope>
    <scope>PATHWAY</scope>
    <scope>BIOTECHNOLOGY</scope>
</reference>
<proteinExistence type="evidence at protein level"/>
<keyword id="KW-0472">Membrane</keyword>
<keyword id="KW-1185">Reference proteome</keyword>
<keyword id="KW-0808">Transferase</keyword>
<keyword id="KW-0812">Transmembrane</keyword>
<keyword id="KW-1133">Transmembrane helix</keyword>
<dbReference type="EC" id="2.5.1.-" evidence="6"/>
<dbReference type="EMBL" id="AHHD01000387">
    <property type="status" value="NOT_ANNOTATED_CDS"/>
    <property type="molecule type" value="Genomic_DNA"/>
</dbReference>
<dbReference type="InParanoid" id="P9WEW7"/>
<dbReference type="UniPathway" id="UPA00213"/>
<dbReference type="Proteomes" id="UP000007129">
    <property type="component" value="Unassembled WGS sequence"/>
</dbReference>
<dbReference type="GO" id="GO:0005886">
    <property type="term" value="C:plasma membrane"/>
    <property type="evidence" value="ECO:0007669"/>
    <property type="project" value="TreeGrafter"/>
</dbReference>
<dbReference type="GO" id="GO:0016765">
    <property type="term" value="F:transferase activity, transferring alkyl or aryl (other than methyl) groups"/>
    <property type="evidence" value="ECO:0007669"/>
    <property type="project" value="InterPro"/>
</dbReference>
<dbReference type="GO" id="GO:0016114">
    <property type="term" value="P:terpenoid biosynthetic process"/>
    <property type="evidence" value="ECO:0007669"/>
    <property type="project" value="UniProtKB-UniPathway"/>
</dbReference>
<dbReference type="Gene3D" id="1.10.357.140">
    <property type="entry name" value="UbiA prenyltransferase"/>
    <property type="match status" value="1"/>
</dbReference>
<dbReference type="Gene3D" id="1.20.120.1780">
    <property type="entry name" value="UbiA prenyltransferase"/>
    <property type="match status" value="1"/>
</dbReference>
<dbReference type="InterPro" id="IPR039653">
    <property type="entry name" value="Prenyltransferase"/>
</dbReference>
<dbReference type="InterPro" id="IPR000537">
    <property type="entry name" value="UbiA_prenyltransferase"/>
</dbReference>
<dbReference type="InterPro" id="IPR044878">
    <property type="entry name" value="UbiA_sf"/>
</dbReference>
<dbReference type="PANTHER" id="PTHR11048:SF28">
    <property type="entry name" value="4-HYDROXYBENZOATE POLYPRENYLTRANSFERASE, MITOCHONDRIAL"/>
    <property type="match status" value="1"/>
</dbReference>
<dbReference type="PANTHER" id="PTHR11048">
    <property type="entry name" value="PRENYLTRANSFERASES"/>
    <property type="match status" value="1"/>
</dbReference>
<dbReference type="Pfam" id="PF01040">
    <property type="entry name" value="UbiA"/>
    <property type="match status" value="2"/>
</dbReference>
<protein>
    <recommendedName>
        <fullName evidence="4">Polyprenyl transferase dpmpC</fullName>
        <ecNumber evidence="6">2.5.1.-</ecNumber>
    </recommendedName>
    <alternativeName>
        <fullName evidence="4">Diterpenoid pyrone biosynthesis cluster protein C</fullName>
    </alternativeName>
</protein>